<name>SYY2_BACHK</name>
<keyword id="KW-0030">Aminoacyl-tRNA synthetase</keyword>
<keyword id="KW-0067">ATP-binding</keyword>
<keyword id="KW-0963">Cytoplasm</keyword>
<keyword id="KW-0436">Ligase</keyword>
<keyword id="KW-0547">Nucleotide-binding</keyword>
<keyword id="KW-0648">Protein biosynthesis</keyword>
<keyword id="KW-0694">RNA-binding</keyword>
<comment type="function">
    <text evidence="1">Catalyzes the attachment of tyrosine to tRNA(Tyr) in a two-step reaction: tyrosine is first activated by ATP to form Tyr-AMP and then transferred to the acceptor end of tRNA(Tyr).</text>
</comment>
<comment type="catalytic activity">
    <reaction evidence="1">
        <text>tRNA(Tyr) + L-tyrosine + ATP = L-tyrosyl-tRNA(Tyr) + AMP + diphosphate + H(+)</text>
        <dbReference type="Rhea" id="RHEA:10220"/>
        <dbReference type="Rhea" id="RHEA-COMP:9706"/>
        <dbReference type="Rhea" id="RHEA-COMP:9707"/>
        <dbReference type="ChEBI" id="CHEBI:15378"/>
        <dbReference type="ChEBI" id="CHEBI:30616"/>
        <dbReference type="ChEBI" id="CHEBI:33019"/>
        <dbReference type="ChEBI" id="CHEBI:58315"/>
        <dbReference type="ChEBI" id="CHEBI:78442"/>
        <dbReference type="ChEBI" id="CHEBI:78536"/>
        <dbReference type="ChEBI" id="CHEBI:456215"/>
        <dbReference type="EC" id="6.1.1.1"/>
    </reaction>
</comment>
<comment type="subunit">
    <text evidence="1">Homodimer.</text>
</comment>
<comment type="subcellular location">
    <subcellularLocation>
        <location evidence="1">Cytoplasm</location>
    </subcellularLocation>
</comment>
<comment type="similarity">
    <text evidence="1">Belongs to the class-I aminoacyl-tRNA synthetase family. TyrS type 1 subfamily.</text>
</comment>
<dbReference type="EC" id="6.1.1.1" evidence="1"/>
<dbReference type="EMBL" id="AE017355">
    <property type="protein sequence ID" value="AAT63297.1"/>
    <property type="molecule type" value="Genomic_DNA"/>
</dbReference>
<dbReference type="RefSeq" id="YP_039086.1">
    <property type="nucleotide sequence ID" value="NC_005957.1"/>
</dbReference>
<dbReference type="SMR" id="Q6HBJ0"/>
<dbReference type="KEGG" id="btk:BT9727_4777"/>
<dbReference type="PATRIC" id="fig|281309.8.peg.5083"/>
<dbReference type="HOGENOM" id="CLU_024003_0_3_9"/>
<dbReference type="Proteomes" id="UP000001301">
    <property type="component" value="Chromosome"/>
</dbReference>
<dbReference type="GO" id="GO:0005829">
    <property type="term" value="C:cytosol"/>
    <property type="evidence" value="ECO:0007669"/>
    <property type="project" value="TreeGrafter"/>
</dbReference>
<dbReference type="GO" id="GO:0005524">
    <property type="term" value="F:ATP binding"/>
    <property type="evidence" value="ECO:0007669"/>
    <property type="project" value="UniProtKB-UniRule"/>
</dbReference>
<dbReference type="GO" id="GO:0003723">
    <property type="term" value="F:RNA binding"/>
    <property type="evidence" value="ECO:0007669"/>
    <property type="project" value="UniProtKB-KW"/>
</dbReference>
<dbReference type="GO" id="GO:0004831">
    <property type="term" value="F:tyrosine-tRNA ligase activity"/>
    <property type="evidence" value="ECO:0007669"/>
    <property type="project" value="UniProtKB-UniRule"/>
</dbReference>
<dbReference type="GO" id="GO:0006437">
    <property type="term" value="P:tyrosyl-tRNA aminoacylation"/>
    <property type="evidence" value="ECO:0007669"/>
    <property type="project" value="UniProtKB-UniRule"/>
</dbReference>
<dbReference type="CDD" id="cd00165">
    <property type="entry name" value="S4"/>
    <property type="match status" value="1"/>
</dbReference>
<dbReference type="CDD" id="cd00805">
    <property type="entry name" value="TyrRS_core"/>
    <property type="match status" value="1"/>
</dbReference>
<dbReference type="FunFam" id="1.10.240.10:FF:000001">
    <property type="entry name" value="Tyrosine--tRNA ligase"/>
    <property type="match status" value="1"/>
</dbReference>
<dbReference type="FunFam" id="3.40.50.620:FF:000008">
    <property type="entry name" value="Tyrosine--tRNA ligase"/>
    <property type="match status" value="1"/>
</dbReference>
<dbReference type="Gene3D" id="3.40.50.620">
    <property type="entry name" value="HUPs"/>
    <property type="match status" value="1"/>
</dbReference>
<dbReference type="Gene3D" id="3.10.290.10">
    <property type="entry name" value="RNA-binding S4 domain"/>
    <property type="match status" value="1"/>
</dbReference>
<dbReference type="Gene3D" id="1.10.240.10">
    <property type="entry name" value="Tyrosyl-Transfer RNA Synthetase"/>
    <property type="match status" value="1"/>
</dbReference>
<dbReference type="HAMAP" id="MF_02006">
    <property type="entry name" value="Tyr_tRNA_synth_type1"/>
    <property type="match status" value="1"/>
</dbReference>
<dbReference type="InterPro" id="IPR001412">
    <property type="entry name" value="aa-tRNA-synth_I_CS"/>
</dbReference>
<dbReference type="InterPro" id="IPR002305">
    <property type="entry name" value="aa-tRNA-synth_Ic"/>
</dbReference>
<dbReference type="InterPro" id="IPR014729">
    <property type="entry name" value="Rossmann-like_a/b/a_fold"/>
</dbReference>
<dbReference type="InterPro" id="IPR002942">
    <property type="entry name" value="S4_RNA-bd"/>
</dbReference>
<dbReference type="InterPro" id="IPR036986">
    <property type="entry name" value="S4_RNA-bd_sf"/>
</dbReference>
<dbReference type="InterPro" id="IPR054608">
    <property type="entry name" value="SYY-like_C"/>
</dbReference>
<dbReference type="InterPro" id="IPR002307">
    <property type="entry name" value="Tyr-tRNA-ligase"/>
</dbReference>
<dbReference type="InterPro" id="IPR024088">
    <property type="entry name" value="Tyr-tRNA-ligase_bac-type"/>
</dbReference>
<dbReference type="InterPro" id="IPR024107">
    <property type="entry name" value="Tyr-tRNA-ligase_bac_1"/>
</dbReference>
<dbReference type="NCBIfam" id="TIGR00234">
    <property type="entry name" value="tyrS"/>
    <property type="match status" value="1"/>
</dbReference>
<dbReference type="PANTHER" id="PTHR11766:SF0">
    <property type="entry name" value="TYROSINE--TRNA LIGASE, MITOCHONDRIAL"/>
    <property type="match status" value="1"/>
</dbReference>
<dbReference type="PANTHER" id="PTHR11766">
    <property type="entry name" value="TYROSYL-TRNA SYNTHETASE"/>
    <property type="match status" value="1"/>
</dbReference>
<dbReference type="Pfam" id="PF22421">
    <property type="entry name" value="SYY_C-terminal"/>
    <property type="match status" value="1"/>
</dbReference>
<dbReference type="Pfam" id="PF00579">
    <property type="entry name" value="tRNA-synt_1b"/>
    <property type="match status" value="1"/>
</dbReference>
<dbReference type="PRINTS" id="PR01040">
    <property type="entry name" value="TRNASYNTHTYR"/>
</dbReference>
<dbReference type="SMART" id="SM00363">
    <property type="entry name" value="S4"/>
    <property type="match status" value="1"/>
</dbReference>
<dbReference type="SUPFAM" id="SSF55174">
    <property type="entry name" value="Alpha-L RNA-binding motif"/>
    <property type="match status" value="1"/>
</dbReference>
<dbReference type="SUPFAM" id="SSF52374">
    <property type="entry name" value="Nucleotidylyl transferase"/>
    <property type="match status" value="1"/>
</dbReference>
<dbReference type="PROSITE" id="PS00178">
    <property type="entry name" value="AA_TRNA_LIGASE_I"/>
    <property type="match status" value="1"/>
</dbReference>
<dbReference type="PROSITE" id="PS50889">
    <property type="entry name" value="S4"/>
    <property type="match status" value="1"/>
</dbReference>
<protein>
    <recommendedName>
        <fullName evidence="1">Tyrosine--tRNA ligase 2</fullName>
        <ecNumber evidence="1">6.1.1.1</ecNumber>
    </recommendedName>
    <alternativeName>
        <fullName evidence="1">Tyrosyl-tRNA synthetase 2</fullName>
        <shortName evidence="1">TyrRS 2</shortName>
    </alternativeName>
</protein>
<accession>Q6HBJ0</accession>
<gene>
    <name evidence="1" type="primary">tyrS2</name>
    <name type="ordered locus">BT9727_4777</name>
</gene>
<evidence type="ECO:0000255" key="1">
    <source>
        <dbReference type="HAMAP-Rule" id="MF_02006"/>
    </source>
</evidence>
<proteinExistence type="inferred from homology"/>
<organism>
    <name type="scientific">Bacillus thuringiensis subsp. konkukian (strain 97-27)</name>
    <dbReference type="NCBI Taxonomy" id="281309"/>
    <lineage>
        <taxon>Bacteria</taxon>
        <taxon>Bacillati</taxon>
        <taxon>Bacillota</taxon>
        <taxon>Bacilli</taxon>
        <taxon>Bacillales</taxon>
        <taxon>Bacillaceae</taxon>
        <taxon>Bacillus</taxon>
        <taxon>Bacillus cereus group</taxon>
    </lineage>
</organism>
<reference key="1">
    <citation type="journal article" date="2006" name="J. Bacteriol.">
        <title>Pathogenomic sequence analysis of Bacillus cereus and Bacillus thuringiensis isolates closely related to Bacillus anthracis.</title>
        <authorList>
            <person name="Han C.S."/>
            <person name="Xie G."/>
            <person name="Challacombe J.F."/>
            <person name="Altherr M.R."/>
            <person name="Bhotika S.S."/>
            <person name="Bruce D."/>
            <person name="Campbell C.S."/>
            <person name="Campbell M.L."/>
            <person name="Chen J."/>
            <person name="Chertkov O."/>
            <person name="Cleland C."/>
            <person name="Dimitrijevic M."/>
            <person name="Doggett N.A."/>
            <person name="Fawcett J.J."/>
            <person name="Glavina T."/>
            <person name="Goodwin L.A."/>
            <person name="Hill K.K."/>
            <person name="Hitchcock P."/>
            <person name="Jackson P.J."/>
            <person name="Keim P."/>
            <person name="Kewalramani A.R."/>
            <person name="Longmire J."/>
            <person name="Lucas S."/>
            <person name="Malfatti S."/>
            <person name="McMurry K."/>
            <person name="Meincke L.J."/>
            <person name="Misra M."/>
            <person name="Moseman B.L."/>
            <person name="Mundt M."/>
            <person name="Munk A.C."/>
            <person name="Okinaka R.T."/>
            <person name="Parson-Quintana B."/>
            <person name="Reilly L.P."/>
            <person name="Richardson P."/>
            <person name="Robinson D.L."/>
            <person name="Rubin E."/>
            <person name="Saunders E."/>
            <person name="Tapia R."/>
            <person name="Tesmer J.G."/>
            <person name="Thayer N."/>
            <person name="Thompson L.S."/>
            <person name="Tice H."/>
            <person name="Ticknor L.O."/>
            <person name="Wills P.L."/>
            <person name="Brettin T.S."/>
            <person name="Gilna P."/>
        </authorList>
    </citation>
    <scope>NUCLEOTIDE SEQUENCE [LARGE SCALE GENOMIC DNA]</scope>
    <source>
        <strain>97-27</strain>
    </source>
</reference>
<sequence length="419" mass="47341">MNIIDELEWRGAVNQQTDEEGLRKLVEEKKISLYCGVDPTGDSMHIGHLIPFMMMKRFQLAGHQPVILIGGATGTIGDPSGRQSERQLQTLEVVQHNVDALTAQMKKLFDFGGNSEVKMVNNYDWTHEINIIEFLRDYGKNFSINSMLAKDIVASRLDTGISFTEFTYQILQAMDFHHLYTKEDVQLQIGGSDQWGNITSGLDLIRKLEGHEAKVFGLTIPLLLKSDGTKFGKSAGGAVWLDPEKTTPFEFYQFWVNTDDRDVVKYLKYFTFLTKERIDELAVKVETEPHKREAQKVLAEEMTKFVHGEEALLQAVKITAALFSGDIKSLTADEIEQGFKEMPTFQSSKETKNIVEWLVDLGIEPSRRQAREDINNGAISMNGEKVTDVGTDVTVENSFDGRFIIIRKGKKNYSLVKLG</sequence>
<feature type="chain" id="PRO_0000234677" description="Tyrosine--tRNA ligase 2">
    <location>
        <begin position="1"/>
        <end position="419"/>
    </location>
</feature>
<feature type="domain" description="S4 RNA-binding" evidence="1">
    <location>
        <begin position="352"/>
        <end position="418"/>
    </location>
</feature>
<feature type="short sequence motif" description="'HIGH' region">
    <location>
        <begin position="39"/>
        <end position="48"/>
    </location>
</feature>
<feature type="short sequence motif" description="'KMSKS' region">
    <location>
        <begin position="230"/>
        <end position="234"/>
    </location>
</feature>
<feature type="binding site" evidence="1">
    <location>
        <position position="34"/>
    </location>
    <ligand>
        <name>L-tyrosine</name>
        <dbReference type="ChEBI" id="CHEBI:58315"/>
    </ligand>
</feature>
<feature type="binding site" evidence="1">
    <location>
        <position position="168"/>
    </location>
    <ligand>
        <name>L-tyrosine</name>
        <dbReference type="ChEBI" id="CHEBI:58315"/>
    </ligand>
</feature>
<feature type="binding site" evidence="1">
    <location>
        <position position="172"/>
    </location>
    <ligand>
        <name>L-tyrosine</name>
        <dbReference type="ChEBI" id="CHEBI:58315"/>
    </ligand>
</feature>
<feature type="binding site" evidence="1">
    <location>
        <position position="233"/>
    </location>
    <ligand>
        <name>ATP</name>
        <dbReference type="ChEBI" id="CHEBI:30616"/>
    </ligand>
</feature>